<comment type="function">
    <text evidence="1">Essential for recycling GMP and indirectly, cGMP.</text>
</comment>
<comment type="catalytic activity">
    <reaction evidence="1">
        <text>GMP + ATP = GDP + ADP</text>
        <dbReference type="Rhea" id="RHEA:20780"/>
        <dbReference type="ChEBI" id="CHEBI:30616"/>
        <dbReference type="ChEBI" id="CHEBI:58115"/>
        <dbReference type="ChEBI" id="CHEBI:58189"/>
        <dbReference type="ChEBI" id="CHEBI:456216"/>
        <dbReference type="EC" id="2.7.4.8"/>
    </reaction>
</comment>
<comment type="subcellular location">
    <subcellularLocation>
        <location evidence="1">Cytoplasm</location>
    </subcellularLocation>
</comment>
<comment type="similarity">
    <text evidence="1">Belongs to the guanylate kinase family.</text>
</comment>
<dbReference type="EC" id="2.7.4.8" evidence="1"/>
<dbReference type="EMBL" id="CP000453">
    <property type="protein sequence ID" value="ABI57784.1"/>
    <property type="molecule type" value="Genomic_DNA"/>
</dbReference>
<dbReference type="RefSeq" id="WP_011630177.1">
    <property type="nucleotide sequence ID" value="NC_008340.1"/>
</dbReference>
<dbReference type="SMR" id="Q0A5V3"/>
<dbReference type="KEGG" id="aeh:Mlg_2444"/>
<dbReference type="eggNOG" id="COG0194">
    <property type="taxonomic scope" value="Bacteria"/>
</dbReference>
<dbReference type="HOGENOM" id="CLU_001715_1_0_6"/>
<dbReference type="OrthoDB" id="9808150at2"/>
<dbReference type="Proteomes" id="UP000001962">
    <property type="component" value="Chromosome"/>
</dbReference>
<dbReference type="GO" id="GO:0005829">
    <property type="term" value="C:cytosol"/>
    <property type="evidence" value="ECO:0007669"/>
    <property type="project" value="TreeGrafter"/>
</dbReference>
<dbReference type="GO" id="GO:0005524">
    <property type="term" value="F:ATP binding"/>
    <property type="evidence" value="ECO:0007669"/>
    <property type="project" value="UniProtKB-UniRule"/>
</dbReference>
<dbReference type="GO" id="GO:0004385">
    <property type="term" value="F:guanylate kinase activity"/>
    <property type="evidence" value="ECO:0007669"/>
    <property type="project" value="UniProtKB-UniRule"/>
</dbReference>
<dbReference type="CDD" id="cd00071">
    <property type="entry name" value="GMPK"/>
    <property type="match status" value="1"/>
</dbReference>
<dbReference type="FunFam" id="3.40.50.300:FF:000084">
    <property type="entry name" value="Guanylate kinase"/>
    <property type="match status" value="1"/>
</dbReference>
<dbReference type="FunFam" id="3.30.63.10:FF:000002">
    <property type="entry name" value="Guanylate kinase 1"/>
    <property type="match status" value="1"/>
</dbReference>
<dbReference type="Gene3D" id="3.30.63.10">
    <property type="entry name" value="Guanylate Kinase phosphate binding domain"/>
    <property type="match status" value="1"/>
</dbReference>
<dbReference type="Gene3D" id="3.40.50.300">
    <property type="entry name" value="P-loop containing nucleotide triphosphate hydrolases"/>
    <property type="match status" value="1"/>
</dbReference>
<dbReference type="HAMAP" id="MF_00328">
    <property type="entry name" value="Guanylate_kinase"/>
    <property type="match status" value="1"/>
</dbReference>
<dbReference type="InterPro" id="IPR008145">
    <property type="entry name" value="GK/Ca_channel_bsu"/>
</dbReference>
<dbReference type="InterPro" id="IPR008144">
    <property type="entry name" value="Guanylate_kin-like_dom"/>
</dbReference>
<dbReference type="InterPro" id="IPR017665">
    <property type="entry name" value="Guanylate_kinase"/>
</dbReference>
<dbReference type="InterPro" id="IPR020590">
    <property type="entry name" value="Guanylate_kinase_CS"/>
</dbReference>
<dbReference type="InterPro" id="IPR027417">
    <property type="entry name" value="P-loop_NTPase"/>
</dbReference>
<dbReference type="NCBIfam" id="TIGR03263">
    <property type="entry name" value="guanyl_kin"/>
    <property type="match status" value="1"/>
</dbReference>
<dbReference type="PANTHER" id="PTHR23117:SF13">
    <property type="entry name" value="GUANYLATE KINASE"/>
    <property type="match status" value="1"/>
</dbReference>
<dbReference type="PANTHER" id="PTHR23117">
    <property type="entry name" value="GUANYLATE KINASE-RELATED"/>
    <property type="match status" value="1"/>
</dbReference>
<dbReference type="Pfam" id="PF00625">
    <property type="entry name" value="Guanylate_kin"/>
    <property type="match status" value="1"/>
</dbReference>
<dbReference type="SMART" id="SM00072">
    <property type="entry name" value="GuKc"/>
    <property type="match status" value="1"/>
</dbReference>
<dbReference type="SUPFAM" id="SSF52540">
    <property type="entry name" value="P-loop containing nucleoside triphosphate hydrolases"/>
    <property type="match status" value="1"/>
</dbReference>
<dbReference type="PROSITE" id="PS00856">
    <property type="entry name" value="GUANYLATE_KINASE_1"/>
    <property type="match status" value="1"/>
</dbReference>
<dbReference type="PROSITE" id="PS50052">
    <property type="entry name" value="GUANYLATE_KINASE_2"/>
    <property type="match status" value="1"/>
</dbReference>
<reference key="1">
    <citation type="submission" date="2006-08" db="EMBL/GenBank/DDBJ databases">
        <title>Complete sequence of Alkalilimnicola ehrilichei MLHE-1.</title>
        <authorList>
            <person name="Copeland A."/>
            <person name="Lucas S."/>
            <person name="Lapidus A."/>
            <person name="Barry K."/>
            <person name="Detter J.C."/>
            <person name="Glavina del Rio T."/>
            <person name="Hammon N."/>
            <person name="Israni S."/>
            <person name="Dalin E."/>
            <person name="Tice H."/>
            <person name="Pitluck S."/>
            <person name="Sims D."/>
            <person name="Brettin T."/>
            <person name="Bruce D."/>
            <person name="Han C."/>
            <person name="Tapia R."/>
            <person name="Gilna P."/>
            <person name="Schmutz J."/>
            <person name="Larimer F."/>
            <person name="Land M."/>
            <person name="Hauser L."/>
            <person name="Kyrpides N."/>
            <person name="Mikhailova N."/>
            <person name="Oremland R.S."/>
            <person name="Hoeft S.E."/>
            <person name="Switzer-Blum J."/>
            <person name="Kulp T."/>
            <person name="King G."/>
            <person name="Tabita R."/>
            <person name="Witte B."/>
            <person name="Santini J.M."/>
            <person name="Basu P."/>
            <person name="Hollibaugh J.T."/>
            <person name="Xie G."/>
            <person name="Stolz J.F."/>
            <person name="Richardson P."/>
        </authorList>
    </citation>
    <scope>NUCLEOTIDE SEQUENCE [LARGE SCALE GENOMIC DNA]</scope>
    <source>
        <strain>ATCC BAA-1101 / DSM 17681 / MLHE-1</strain>
    </source>
</reference>
<keyword id="KW-0067">ATP-binding</keyword>
<keyword id="KW-0963">Cytoplasm</keyword>
<keyword id="KW-0418">Kinase</keyword>
<keyword id="KW-0547">Nucleotide-binding</keyword>
<keyword id="KW-1185">Reference proteome</keyword>
<keyword id="KW-0808">Transferase</keyword>
<sequence>MPGTLYVVSAPSGAGKTSLVNALVRQDEAVSLSVSHTTRPPRPGEEDGVNYHFVDRDRFQALVAQGDFLEHAEVFGNHYGTSRSAVQALLDQGQDVILEIDWQGARQVRERMPGCLSVFILPPSREELRRRLTQRGQDEPEVIDRRMAEAVSEMSHYAEYDYLLVNDDFDRTLADLQAIFTANRHRLERQEPLLAETLRDLLG</sequence>
<name>KGUA_ALKEH</name>
<organism>
    <name type="scientific">Alkalilimnicola ehrlichii (strain ATCC BAA-1101 / DSM 17681 / MLHE-1)</name>
    <dbReference type="NCBI Taxonomy" id="187272"/>
    <lineage>
        <taxon>Bacteria</taxon>
        <taxon>Pseudomonadati</taxon>
        <taxon>Pseudomonadota</taxon>
        <taxon>Gammaproteobacteria</taxon>
        <taxon>Chromatiales</taxon>
        <taxon>Ectothiorhodospiraceae</taxon>
        <taxon>Alkalilimnicola</taxon>
    </lineage>
</organism>
<feature type="chain" id="PRO_0000266282" description="Guanylate kinase">
    <location>
        <begin position="1"/>
        <end position="203"/>
    </location>
</feature>
<feature type="domain" description="Guanylate kinase-like" evidence="1">
    <location>
        <begin position="3"/>
        <end position="181"/>
    </location>
</feature>
<feature type="binding site" evidence="1">
    <location>
        <begin position="10"/>
        <end position="17"/>
    </location>
    <ligand>
        <name>ATP</name>
        <dbReference type="ChEBI" id="CHEBI:30616"/>
    </ligand>
</feature>
<protein>
    <recommendedName>
        <fullName evidence="1">Guanylate kinase</fullName>
        <ecNumber evidence="1">2.7.4.8</ecNumber>
    </recommendedName>
    <alternativeName>
        <fullName evidence="1">GMP kinase</fullName>
    </alternativeName>
</protein>
<evidence type="ECO:0000255" key="1">
    <source>
        <dbReference type="HAMAP-Rule" id="MF_00328"/>
    </source>
</evidence>
<gene>
    <name evidence="1" type="primary">gmk</name>
    <name type="ordered locus">Mlg_2444</name>
</gene>
<accession>Q0A5V3</accession>
<proteinExistence type="inferred from homology"/>